<gene>
    <name evidence="4" type="primary">ATG13</name>
    <name type="ORF">FG08491</name>
    <name type="ORF">FGRAMPH1_01T10093</name>
</gene>
<sequence length="927" mass="99944">MHQQPRGPARVSSPGATTQPNLPSRSNSTREAALGSRPRAGSNLVGRDVPNSPSLESPPIPAPPADSVRKLDQIIQNFYAKAAVLVLDSRIKSRPARGANGARKPNKWFQIETDEIDDFRDELKIWKNCGSLDNRPPPMVIEVYLDASRLKDSQSLVIVDENGKRWDVMEQLNSYGSSTDSSGASRRNNEVVIERWQVELKHSGMTSVDFGPILPTVYKKAIVFFRSLFITTRLLPAWKFASQGAAKNSHPALIPRCRIRLSQPDRPRYDQLRLPIDGRPDPVTEYVFGDLEVPVGRLSTLVTYRSDCNFRVDDSEALLSSRFMGVDENFFRPSLPQQHATSRAPAAEAGSLRDHRSKPNLNDIQQAYGSLSTFHGNVPIGTSPISALRSVRQPGSDTSSPPESIPAQHDVGGPSSLPVRQGTARPHLPALEGLGRRPSVSFQPFKAGSLSGSPVPRQLDAEPASPQSLTRPGIPSLRQAGNRTSLTAGMPASLRGGPPTSSGETAVAGSPRPASTSRYSSSFTHRRGRLSFGGASKAGDDEQGSSGRQSLASSVAQPGSGLLAEVAGTSSESLRDDNEQLEDFIKALDSKKTLQSFGPSKTGESATNKTVAQLSRFHMMRDSNNALTESMTSSVQMQRSSSSSSRQLTSVPGMTAPASVSASSSPGKPLSPHTPHTPAIPSRLSENSIIDYSGQGRITSRQGRTSDNTQPGTIRENTITQDGTTAIDIPLSPRLATYQRRASSVAIQNRSMADDDDTDSAFAHRSISLGADDREPPTLSILLGRQMQLEEDSTQRPSDRLEPAADTGSTETPDMLRQGLSEENPPEGLIPAATSSSPFGRRRYMGMASHKQTPPQSSRGSFNGSLNRQVRGDDDSVNEEPLVFDLSEMDPQGRRSIEEARSGASGGPNIGPDRGGYESRNASRRGW</sequence>
<feature type="chain" id="PRO_0000443907" description="Autophagy-related protein 13">
    <location>
        <begin position="1"/>
        <end position="927"/>
    </location>
</feature>
<feature type="region of interest" description="Disordered" evidence="2">
    <location>
        <begin position="1"/>
        <end position="66"/>
    </location>
</feature>
<feature type="region of interest" description="Disordered" evidence="2">
    <location>
        <begin position="334"/>
        <end position="359"/>
    </location>
</feature>
<feature type="region of interest" description="Disordered" evidence="2">
    <location>
        <begin position="388"/>
        <end position="559"/>
    </location>
</feature>
<feature type="region of interest" description="Disordered" evidence="2">
    <location>
        <begin position="628"/>
        <end position="716"/>
    </location>
</feature>
<feature type="region of interest" description="Disordered" evidence="2">
    <location>
        <begin position="786"/>
        <end position="927"/>
    </location>
</feature>
<feature type="compositionally biased region" description="Polar residues" evidence="2">
    <location>
        <begin position="14"/>
        <end position="30"/>
    </location>
</feature>
<feature type="compositionally biased region" description="Polar residues" evidence="2">
    <location>
        <begin position="393"/>
        <end position="402"/>
    </location>
</feature>
<feature type="compositionally biased region" description="Polar residues" evidence="2">
    <location>
        <begin position="513"/>
        <end position="523"/>
    </location>
</feature>
<feature type="compositionally biased region" description="Polar residues" evidence="2">
    <location>
        <begin position="544"/>
        <end position="557"/>
    </location>
</feature>
<feature type="compositionally biased region" description="Low complexity" evidence="2">
    <location>
        <begin position="630"/>
        <end position="671"/>
    </location>
</feature>
<feature type="compositionally biased region" description="Polar residues" evidence="2">
    <location>
        <begin position="684"/>
        <end position="716"/>
    </location>
</feature>
<feature type="compositionally biased region" description="Basic and acidic residues" evidence="2">
    <location>
        <begin position="793"/>
        <end position="803"/>
    </location>
</feature>
<feature type="compositionally biased region" description="Polar residues" evidence="2">
    <location>
        <begin position="850"/>
        <end position="868"/>
    </location>
</feature>
<feature type="compositionally biased region" description="Basic and acidic residues" evidence="2">
    <location>
        <begin position="891"/>
        <end position="901"/>
    </location>
</feature>
<organism>
    <name type="scientific">Gibberella zeae (strain ATCC MYA-4620 / CBS 123657 / FGSC 9075 / NRRL 31084 / PH-1)</name>
    <name type="common">Wheat head blight fungus</name>
    <name type="synonym">Fusarium graminearum</name>
    <dbReference type="NCBI Taxonomy" id="229533"/>
    <lineage>
        <taxon>Eukaryota</taxon>
        <taxon>Fungi</taxon>
        <taxon>Dikarya</taxon>
        <taxon>Ascomycota</taxon>
        <taxon>Pezizomycotina</taxon>
        <taxon>Sordariomycetes</taxon>
        <taxon>Hypocreomycetidae</taxon>
        <taxon>Hypocreales</taxon>
        <taxon>Nectriaceae</taxon>
        <taxon>Fusarium</taxon>
    </lineage>
</organism>
<name>ATG13_GIBZE</name>
<proteinExistence type="inferred from homology"/>
<accession>I1RW37</accession>
<dbReference type="EMBL" id="HG970333">
    <property type="protein sequence ID" value="CEF76849.1"/>
    <property type="molecule type" value="Genomic_DNA"/>
</dbReference>
<dbReference type="RefSeq" id="XP_011320271.1">
    <property type="nucleotide sequence ID" value="XM_011321969.1"/>
</dbReference>
<dbReference type="SMR" id="I1RW37"/>
<dbReference type="FunCoup" id="I1RW37">
    <property type="interactions" value="31"/>
</dbReference>
<dbReference type="STRING" id="229533.I1RW37"/>
<dbReference type="KEGG" id="fgr:FGSG_08491"/>
<dbReference type="VEuPathDB" id="FungiDB:FGRAMPH1_01G10093"/>
<dbReference type="eggNOG" id="KOG4573">
    <property type="taxonomic scope" value="Eukaryota"/>
</dbReference>
<dbReference type="HOGENOM" id="CLU_007151_1_0_1"/>
<dbReference type="InParanoid" id="I1RW37"/>
<dbReference type="OrthoDB" id="133472at110618"/>
<dbReference type="Proteomes" id="UP000070720">
    <property type="component" value="Chromosome 2"/>
</dbReference>
<dbReference type="GO" id="GO:1990316">
    <property type="term" value="C:Atg1/ULK1 kinase complex"/>
    <property type="evidence" value="ECO:0007669"/>
    <property type="project" value="InterPro"/>
</dbReference>
<dbReference type="GO" id="GO:0005829">
    <property type="term" value="C:cytosol"/>
    <property type="evidence" value="ECO:0007669"/>
    <property type="project" value="TreeGrafter"/>
</dbReference>
<dbReference type="GO" id="GO:0000407">
    <property type="term" value="C:phagophore assembly site"/>
    <property type="evidence" value="ECO:0007669"/>
    <property type="project" value="UniProtKB-SubCell"/>
</dbReference>
<dbReference type="GO" id="GO:0000423">
    <property type="term" value="P:mitophagy"/>
    <property type="evidence" value="ECO:0007669"/>
    <property type="project" value="TreeGrafter"/>
</dbReference>
<dbReference type="GO" id="GO:0034727">
    <property type="term" value="P:piecemeal microautophagy of the nucleus"/>
    <property type="evidence" value="ECO:0007669"/>
    <property type="project" value="TreeGrafter"/>
</dbReference>
<dbReference type="GO" id="GO:0034497">
    <property type="term" value="P:protein localization to phagophore assembly site"/>
    <property type="evidence" value="ECO:0007669"/>
    <property type="project" value="TreeGrafter"/>
</dbReference>
<dbReference type="GO" id="GO:0015031">
    <property type="term" value="P:protein transport"/>
    <property type="evidence" value="ECO:0007669"/>
    <property type="project" value="UniProtKB-KW"/>
</dbReference>
<dbReference type="Gene3D" id="6.10.140.1900">
    <property type="match status" value="1"/>
</dbReference>
<dbReference type="Gene3D" id="3.30.900.10">
    <property type="entry name" value="HORMA domain"/>
    <property type="match status" value="1"/>
</dbReference>
<dbReference type="InterPro" id="IPR040182">
    <property type="entry name" value="ATG13"/>
</dbReference>
<dbReference type="InterPro" id="IPR018731">
    <property type="entry name" value="Atg13_N"/>
</dbReference>
<dbReference type="InterPro" id="IPR036570">
    <property type="entry name" value="HORMA_dom_sf"/>
</dbReference>
<dbReference type="PANTHER" id="PTHR13430">
    <property type="match status" value="1"/>
</dbReference>
<dbReference type="PANTHER" id="PTHR13430:SF4">
    <property type="entry name" value="AUTOPHAGY-RELATED PROTEIN 13"/>
    <property type="match status" value="1"/>
</dbReference>
<dbReference type="Pfam" id="PF10033">
    <property type="entry name" value="ATG13"/>
    <property type="match status" value="1"/>
</dbReference>
<reference key="1">
    <citation type="journal article" date="2007" name="Science">
        <title>The Fusarium graminearum genome reveals a link between localized polymorphism and pathogen specialization.</title>
        <authorList>
            <person name="Cuomo C.A."/>
            <person name="Gueldener U."/>
            <person name="Xu J.-R."/>
            <person name="Trail F."/>
            <person name="Turgeon B.G."/>
            <person name="Di Pietro A."/>
            <person name="Walton J.D."/>
            <person name="Ma L.-J."/>
            <person name="Baker S.E."/>
            <person name="Rep M."/>
            <person name="Adam G."/>
            <person name="Antoniw J."/>
            <person name="Baldwin T."/>
            <person name="Calvo S.E."/>
            <person name="Chang Y.-L."/>
            <person name="DeCaprio D."/>
            <person name="Gale L.R."/>
            <person name="Gnerre S."/>
            <person name="Goswami R.S."/>
            <person name="Hammond-Kosack K."/>
            <person name="Harris L.J."/>
            <person name="Hilburn K."/>
            <person name="Kennell J.C."/>
            <person name="Kroken S."/>
            <person name="Magnuson J.K."/>
            <person name="Mannhaupt G."/>
            <person name="Mauceli E.W."/>
            <person name="Mewes H.-W."/>
            <person name="Mitterbauer R."/>
            <person name="Muehlbauer G."/>
            <person name="Muensterkoetter M."/>
            <person name="Nelson D."/>
            <person name="O'Donnell K."/>
            <person name="Ouellet T."/>
            <person name="Qi W."/>
            <person name="Quesneville H."/>
            <person name="Roncero M.I.G."/>
            <person name="Seong K.-Y."/>
            <person name="Tetko I.V."/>
            <person name="Urban M."/>
            <person name="Waalwijk C."/>
            <person name="Ward T.J."/>
            <person name="Yao J."/>
            <person name="Birren B.W."/>
            <person name="Kistler H.C."/>
        </authorList>
    </citation>
    <scope>NUCLEOTIDE SEQUENCE [LARGE SCALE GENOMIC DNA]</scope>
    <source>
        <strain>ATCC MYA-4620 / CBS 123657 / FGSC 9075 / NRRL 31084 / PH-1</strain>
    </source>
</reference>
<reference key="2">
    <citation type="journal article" date="2010" name="Nature">
        <title>Comparative genomics reveals mobile pathogenicity chromosomes in Fusarium.</title>
        <authorList>
            <person name="Ma L.-J."/>
            <person name="van der Does H.C."/>
            <person name="Borkovich K.A."/>
            <person name="Coleman J.J."/>
            <person name="Daboussi M.-J."/>
            <person name="Di Pietro A."/>
            <person name="Dufresne M."/>
            <person name="Freitag M."/>
            <person name="Grabherr M."/>
            <person name="Henrissat B."/>
            <person name="Houterman P.M."/>
            <person name="Kang S."/>
            <person name="Shim W.-B."/>
            <person name="Woloshuk C."/>
            <person name="Xie X."/>
            <person name="Xu J.-R."/>
            <person name="Antoniw J."/>
            <person name="Baker S.E."/>
            <person name="Bluhm B.H."/>
            <person name="Breakspear A."/>
            <person name="Brown D.W."/>
            <person name="Butchko R.A.E."/>
            <person name="Chapman S."/>
            <person name="Coulson R."/>
            <person name="Coutinho P.M."/>
            <person name="Danchin E.G.J."/>
            <person name="Diener A."/>
            <person name="Gale L.R."/>
            <person name="Gardiner D.M."/>
            <person name="Goff S."/>
            <person name="Hammond-Kosack K.E."/>
            <person name="Hilburn K."/>
            <person name="Hua-Van A."/>
            <person name="Jonkers W."/>
            <person name="Kazan K."/>
            <person name="Kodira C.D."/>
            <person name="Koehrsen M."/>
            <person name="Kumar L."/>
            <person name="Lee Y.-H."/>
            <person name="Li L."/>
            <person name="Manners J.M."/>
            <person name="Miranda-Saavedra D."/>
            <person name="Mukherjee M."/>
            <person name="Park G."/>
            <person name="Park J."/>
            <person name="Park S.-Y."/>
            <person name="Proctor R.H."/>
            <person name="Regev A."/>
            <person name="Ruiz-Roldan M.C."/>
            <person name="Sain D."/>
            <person name="Sakthikumar S."/>
            <person name="Sykes S."/>
            <person name="Schwartz D.C."/>
            <person name="Turgeon B.G."/>
            <person name="Wapinski I."/>
            <person name="Yoder O."/>
            <person name="Young S."/>
            <person name="Zeng Q."/>
            <person name="Zhou S."/>
            <person name="Galagan J."/>
            <person name="Cuomo C.A."/>
            <person name="Kistler H.C."/>
            <person name="Rep M."/>
        </authorList>
    </citation>
    <scope>GENOME REANNOTATION</scope>
    <source>
        <strain>ATCC MYA-4620 / CBS 123657 / FGSC 9075 / NRRL 31084 / PH-1</strain>
    </source>
</reference>
<reference key="3">
    <citation type="journal article" date="2015" name="BMC Genomics">
        <title>The completed genome sequence of the pathogenic ascomycete fungus Fusarium graminearum.</title>
        <authorList>
            <person name="King R."/>
            <person name="Urban M."/>
            <person name="Hammond-Kosack M.C.U."/>
            <person name="Hassani-Pak K."/>
            <person name="Hammond-Kosack K.E."/>
        </authorList>
    </citation>
    <scope>NUCLEOTIDE SEQUENCE [LARGE SCALE GENOMIC DNA]</scope>
    <source>
        <strain>ATCC MYA-4620 / CBS 123657 / FGSC 9075 / NRRL 31084 / PH-1</strain>
    </source>
</reference>
<reference key="4">
    <citation type="journal article" date="2017" name="Sci. Rep.">
        <title>Genome-wide functional analysis reveals that autophagy is necessary for growth, sporulation, deoxynivalenol production and virulence in Fusarium graminearum.</title>
        <authorList>
            <person name="Lv W."/>
            <person name="Wang C."/>
            <person name="Yang N."/>
            <person name="Que Y."/>
            <person name="Talbot N.J."/>
            <person name="Wang Z."/>
        </authorList>
    </citation>
    <scope>IDENTIFICATION</scope>
    <scope>FUNCTION</scope>
    <scope>DISRUPTION PHENOTYPE</scope>
</reference>
<comment type="function">
    <text evidence="1 3">Activates the ATG1 kinase in a nutritional condition dependent manner through the TOR pathway, leading to autophagy (By similarity). Involved in ATG9 and ATG23 cycling through the pre-autophagosomal structure (By similarity). Also involved in cytoplasm to vacuole transport (Cvt) and more specifically in Cvt vesicle formation (By similarity). Seems to play a role in the switching machinery regulating the conversion between the Cvt pathway and autophagy (By similarity). Finally, ATG13 is also required for glycogen storage during stationary phase (By similarity). Autophagy is required for proper vegetative growth, asexual/sexual reproduction, and full virulence (PubMed:28894236). Autophagy is particularly involved in the biosynthesis of deoxynivalenol (DON), an important virulence determinant (PubMed:28894236).</text>
</comment>
<comment type="subunit">
    <text evidence="1">Hypophosphorylated form interacts with ATG1 to form the ATG1-ATG13 kinase complex (By similarity). The ATG1-ATG13 complex interacts with the ATG17-ATG29-ATG31 complex through direct interaction with ATG17 (By similarity).</text>
</comment>
<comment type="subcellular location">
    <subcellularLocation>
        <location evidence="1">Cytoplasm</location>
    </subcellularLocation>
    <subcellularLocation>
        <location evidence="1">Preautophagosomal structure</location>
    </subcellularLocation>
</comment>
<comment type="disruption phenotype">
    <text evidence="3">Does not significantly decrease the growth rate under nutrient-rich conditions (PubMed:28894236). Strongly reduces conidiation (PubMed:28894236). Causes only mild infection in point-inoculated spikelets of flowering wheat heads and impairs the spreading to nearby spikelets (PubMed:28894236). Also reduces strongly the production of deoxynivalenol (DON), an important virulence determinant (PubMed:28894236).</text>
</comment>
<comment type="similarity">
    <text evidence="5">Belongs to the ATG13 family. Fungi subfamily.</text>
</comment>
<evidence type="ECO:0000250" key="1">
    <source>
        <dbReference type="UniProtKB" id="Q06628"/>
    </source>
</evidence>
<evidence type="ECO:0000256" key="2">
    <source>
        <dbReference type="SAM" id="MobiDB-lite"/>
    </source>
</evidence>
<evidence type="ECO:0000269" key="3">
    <source>
    </source>
</evidence>
<evidence type="ECO:0000303" key="4">
    <source>
    </source>
</evidence>
<evidence type="ECO:0000305" key="5"/>
<keyword id="KW-0072">Autophagy</keyword>
<keyword id="KW-0963">Cytoplasm</keyword>
<keyword id="KW-0653">Protein transport</keyword>
<keyword id="KW-1185">Reference proteome</keyword>
<keyword id="KW-0813">Transport</keyword>
<protein>
    <recommendedName>
        <fullName evidence="4">Autophagy-related protein 13</fullName>
    </recommendedName>
</protein>